<keyword id="KW-0227">DNA damage</keyword>
<keyword id="KW-0233">DNA recombination</keyword>
<keyword id="KW-0234">DNA repair</keyword>
<keyword id="KW-0238">DNA-binding</keyword>
<keyword id="KW-1185">Reference proteome</keyword>
<comment type="function">
    <text evidence="1">With LigD forms a non-homologous end joining (NHEJ) DNA repair enzyme, which repairs dsDNA breaks with reduced fidelity. Binds linear dsDNA with 5'- and 3'- overhangs but not closed circular dsDNA nor ssDNA. Recruits and stimulates the ligase activity of LigD.</text>
</comment>
<comment type="subunit">
    <text evidence="1">Homodimer. Interacts with LigD.</text>
</comment>
<comment type="similarity">
    <text evidence="1">Belongs to the prokaryotic Ku family.</text>
</comment>
<comment type="sequence caution" evidence="3">
    <conflict type="erroneous initiation">
        <sequence resource="EMBL-CDS" id="ABZ84893"/>
    </conflict>
    <text>Extended N-terminus.</text>
</comment>
<dbReference type="EMBL" id="CP000930">
    <property type="protein sequence ID" value="ABZ84893.1"/>
    <property type="status" value="ALT_INIT"/>
    <property type="molecule type" value="Genomic_DNA"/>
</dbReference>
<dbReference type="RefSeq" id="WP_049754122.1">
    <property type="nucleotide sequence ID" value="NC_010337.2"/>
</dbReference>
<dbReference type="SMR" id="B0TIF2"/>
<dbReference type="STRING" id="498761.HM1_3135"/>
<dbReference type="KEGG" id="hmo:HM1_3135"/>
<dbReference type="eggNOG" id="COG1273">
    <property type="taxonomic scope" value="Bacteria"/>
</dbReference>
<dbReference type="HOGENOM" id="CLU_048975_1_0_9"/>
<dbReference type="Proteomes" id="UP000008550">
    <property type="component" value="Chromosome"/>
</dbReference>
<dbReference type="GO" id="GO:0003690">
    <property type="term" value="F:double-stranded DNA binding"/>
    <property type="evidence" value="ECO:0007669"/>
    <property type="project" value="UniProtKB-UniRule"/>
</dbReference>
<dbReference type="GO" id="GO:0006310">
    <property type="term" value="P:DNA recombination"/>
    <property type="evidence" value="ECO:0007669"/>
    <property type="project" value="UniProtKB-KW"/>
</dbReference>
<dbReference type="GO" id="GO:0006303">
    <property type="term" value="P:double-strand break repair via nonhomologous end joining"/>
    <property type="evidence" value="ECO:0007669"/>
    <property type="project" value="UniProtKB-UniRule"/>
</dbReference>
<dbReference type="CDD" id="cd00789">
    <property type="entry name" value="KU_like"/>
    <property type="match status" value="1"/>
</dbReference>
<dbReference type="FunFam" id="2.40.290.10:FF:000004">
    <property type="entry name" value="Non-homologous end joining protein Ku"/>
    <property type="match status" value="1"/>
</dbReference>
<dbReference type="Gene3D" id="2.40.290.10">
    <property type="match status" value="1"/>
</dbReference>
<dbReference type="HAMAP" id="MF_01875">
    <property type="entry name" value="Prokaryotic_Ku"/>
    <property type="match status" value="1"/>
</dbReference>
<dbReference type="InterPro" id="IPR006164">
    <property type="entry name" value="Ku70/Ku80_beta-barrel_dom"/>
</dbReference>
<dbReference type="InterPro" id="IPR009187">
    <property type="entry name" value="Prok_Ku"/>
</dbReference>
<dbReference type="InterPro" id="IPR016194">
    <property type="entry name" value="SPOC-like_C_dom_sf"/>
</dbReference>
<dbReference type="NCBIfam" id="TIGR02772">
    <property type="entry name" value="Ku_bact"/>
    <property type="match status" value="1"/>
</dbReference>
<dbReference type="PANTHER" id="PTHR41251">
    <property type="entry name" value="NON-HOMOLOGOUS END JOINING PROTEIN KU"/>
    <property type="match status" value="1"/>
</dbReference>
<dbReference type="PANTHER" id="PTHR41251:SF1">
    <property type="entry name" value="NON-HOMOLOGOUS END JOINING PROTEIN KU"/>
    <property type="match status" value="1"/>
</dbReference>
<dbReference type="Pfam" id="PF02735">
    <property type="entry name" value="Ku"/>
    <property type="match status" value="1"/>
</dbReference>
<dbReference type="PIRSF" id="PIRSF006493">
    <property type="entry name" value="Prok_Ku"/>
    <property type="match status" value="1"/>
</dbReference>
<dbReference type="SMART" id="SM00559">
    <property type="entry name" value="Ku78"/>
    <property type="match status" value="1"/>
</dbReference>
<dbReference type="SUPFAM" id="SSF100939">
    <property type="entry name" value="SPOC domain-like"/>
    <property type="match status" value="1"/>
</dbReference>
<reference key="1">
    <citation type="journal article" date="2008" name="J. Bacteriol.">
        <title>The genome of Heliobacterium modesticaldum, a phototrophic representative of the Firmicutes containing the simplest photosynthetic apparatus.</title>
        <authorList>
            <person name="Sattley W.M."/>
            <person name="Madigan M.T."/>
            <person name="Swingley W.D."/>
            <person name="Cheung P.C."/>
            <person name="Clocksin K.M."/>
            <person name="Conrad A.L."/>
            <person name="Dejesa L.C."/>
            <person name="Honchak B.M."/>
            <person name="Jung D.O."/>
            <person name="Karbach L.E."/>
            <person name="Kurdoglu A."/>
            <person name="Lahiri S."/>
            <person name="Mastrian S.D."/>
            <person name="Page L.E."/>
            <person name="Taylor H.L."/>
            <person name="Wang Z.T."/>
            <person name="Raymond J."/>
            <person name="Chen M."/>
            <person name="Blankenship R.E."/>
            <person name="Touchman J.W."/>
        </authorList>
    </citation>
    <scope>NUCLEOTIDE SEQUENCE [LARGE SCALE GENOMIC DNA]</scope>
    <source>
        <strain>ATCC 51547 / Ice1</strain>
    </source>
</reference>
<organism>
    <name type="scientific">Heliobacterium modesticaldum (strain ATCC 51547 / Ice1)</name>
    <dbReference type="NCBI Taxonomy" id="498761"/>
    <lineage>
        <taxon>Bacteria</taxon>
        <taxon>Bacillati</taxon>
        <taxon>Bacillota</taxon>
        <taxon>Clostridia</taxon>
        <taxon>Eubacteriales</taxon>
        <taxon>Heliobacteriaceae</taxon>
        <taxon>Heliomicrobium</taxon>
    </lineage>
</organism>
<feature type="chain" id="PRO_0000389188" description="Non-homologous end joining protein Ku">
    <location>
        <begin position="1"/>
        <end position="276"/>
    </location>
</feature>
<feature type="domain" description="Ku" evidence="1">
    <location>
        <begin position="11"/>
        <end position="177"/>
    </location>
</feature>
<feature type="region of interest" description="Disordered" evidence="2">
    <location>
        <begin position="256"/>
        <end position="276"/>
    </location>
</feature>
<evidence type="ECO:0000255" key="1">
    <source>
        <dbReference type="HAMAP-Rule" id="MF_01875"/>
    </source>
</evidence>
<evidence type="ECO:0000256" key="2">
    <source>
        <dbReference type="SAM" id="MobiDB-lite"/>
    </source>
</evidence>
<evidence type="ECO:0000305" key="3"/>
<gene>
    <name evidence="1" type="primary">ku</name>
    <name type="ordered locus">Helmi_22680</name>
    <name type="ORF">HM1_3135</name>
</gene>
<proteinExistence type="inferred from homology"/>
<protein>
    <recommendedName>
        <fullName evidence="1">Non-homologous end joining protein Ku</fullName>
    </recommendedName>
</protein>
<accession>B0TIF2</accession>
<name>KU_HELMI</name>
<sequence length="276" mass="31643">MIVRSIWKGAISFGLVHIPIKLFAATEEKDVRFHLLHKECHNPIQYQKRCPYCDREVTPEEIVKGFEYDKGRYVIITQEELEGLAPEGSRSIDIQSFVALKEIDPIFFVKTYYLSPDQHGQKAYALLRNALRETDRLALARVILRTKEALVALRVYGKGLAMHTMLYPEEIRSMEPLGDLGESIEVSAKEQTMAVQLIESLTEPFDPVKWQSEQRERIRHFINAKVQGQAIVEAPQTPTVGKVIDLMEALKASIQQVKTQQKKEAAPKKERRRKTS</sequence>